<keyword id="KW-0963">Cytoplasm</keyword>
<keyword id="KW-1185">Reference proteome</keyword>
<keyword id="KW-0690">Ribosome biogenesis</keyword>
<reference key="1">
    <citation type="journal article" date="2009" name="J. Bacteriol.">
        <title>Genome sequences of three Agrobacterium biovars help elucidate the evolution of multichromosome genomes in bacteria.</title>
        <authorList>
            <person name="Slater S.C."/>
            <person name="Goldman B.S."/>
            <person name="Goodner B."/>
            <person name="Setubal J.C."/>
            <person name="Farrand S.K."/>
            <person name="Nester E.W."/>
            <person name="Burr T.J."/>
            <person name="Banta L."/>
            <person name="Dickerman A.W."/>
            <person name="Paulsen I."/>
            <person name="Otten L."/>
            <person name="Suen G."/>
            <person name="Welch R."/>
            <person name="Almeida N.F."/>
            <person name="Arnold F."/>
            <person name="Burton O.T."/>
            <person name="Du Z."/>
            <person name="Ewing A."/>
            <person name="Godsy E."/>
            <person name="Heisel S."/>
            <person name="Houmiel K.L."/>
            <person name="Jhaveri J."/>
            <person name="Lu J."/>
            <person name="Miller N.M."/>
            <person name="Norton S."/>
            <person name="Chen Q."/>
            <person name="Phoolcharoen W."/>
            <person name="Ohlin V."/>
            <person name="Ondrusek D."/>
            <person name="Pride N."/>
            <person name="Stricklin S.L."/>
            <person name="Sun J."/>
            <person name="Wheeler C."/>
            <person name="Wilson L."/>
            <person name="Zhu H."/>
            <person name="Wood D.W."/>
        </authorList>
    </citation>
    <scope>NUCLEOTIDE SEQUENCE [LARGE SCALE GENOMIC DNA]</scope>
    <source>
        <strain>ATCC BAA-846 / DSM 112012 / S4</strain>
    </source>
</reference>
<comment type="function">
    <text evidence="1">Required for maturation of 30S ribosomal subunits.</text>
</comment>
<comment type="subcellular location">
    <subcellularLocation>
        <location evidence="1">Cytoplasm</location>
    </subcellularLocation>
</comment>
<comment type="similarity">
    <text evidence="1">Belongs to the RimP family.</text>
</comment>
<feature type="chain" id="PRO_0000384593" description="Ribosome maturation factor RimP">
    <location>
        <begin position="1"/>
        <end position="204"/>
    </location>
</feature>
<name>RIMP_ALLAM</name>
<dbReference type="EMBL" id="CP000633">
    <property type="protein sequence ID" value="ACM35099.1"/>
    <property type="molecule type" value="Genomic_DNA"/>
</dbReference>
<dbReference type="RefSeq" id="WP_012654629.1">
    <property type="nucleotide sequence ID" value="NC_011989.1"/>
</dbReference>
<dbReference type="SMR" id="B9JYK3"/>
<dbReference type="STRING" id="311402.Avi_0164"/>
<dbReference type="KEGG" id="avi:Avi_0164"/>
<dbReference type="eggNOG" id="COG0779">
    <property type="taxonomic scope" value="Bacteria"/>
</dbReference>
<dbReference type="HOGENOM" id="CLU_070525_0_1_5"/>
<dbReference type="Proteomes" id="UP000001596">
    <property type="component" value="Chromosome 1"/>
</dbReference>
<dbReference type="GO" id="GO:0005829">
    <property type="term" value="C:cytosol"/>
    <property type="evidence" value="ECO:0007669"/>
    <property type="project" value="TreeGrafter"/>
</dbReference>
<dbReference type="GO" id="GO:0000028">
    <property type="term" value="P:ribosomal small subunit assembly"/>
    <property type="evidence" value="ECO:0007669"/>
    <property type="project" value="TreeGrafter"/>
</dbReference>
<dbReference type="GO" id="GO:0006412">
    <property type="term" value="P:translation"/>
    <property type="evidence" value="ECO:0007669"/>
    <property type="project" value="TreeGrafter"/>
</dbReference>
<dbReference type="CDD" id="cd01734">
    <property type="entry name" value="YlxS_C"/>
    <property type="match status" value="1"/>
</dbReference>
<dbReference type="FunFam" id="3.30.300.70:FF:000001">
    <property type="entry name" value="Ribosome maturation factor RimP"/>
    <property type="match status" value="1"/>
</dbReference>
<dbReference type="Gene3D" id="3.30.300.70">
    <property type="entry name" value="RimP-like superfamily, N-terminal"/>
    <property type="match status" value="1"/>
</dbReference>
<dbReference type="HAMAP" id="MF_01077">
    <property type="entry name" value="RimP"/>
    <property type="match status" value="1"/>
</dbReference>
<dbReference type="InterPro" id="IPR003728">
    <property type="entry name" value="Ribosome_maturation_RimP"/>
</dbReference>
<dbReference type="InterPro" id="IPR028998">
    <property type="entry name" value="RimP_C"/>
</dbReference>
<dbReference type="InterPro" id="IPR036847">
    <property type="entry name" value="RimP_C_sf"/>
</dbReference>
<dbReference type="InterPro" id="IPR028989">
    <property type="entry name" value="RimP_N"/>
</dbReference>
<dbReference type="InterPro" id="IPR035956">
    <property type="entry name" value="RimP_N_sf"/>
</dbReference>
<dbReference type="NCBIfam" id="NF000932">
    <property type="entry name" value="PRK00092.2-5"/>
    <property type="match status" value="1"/>
</dbReference>
<dbReference type="PANTHER" id="PTHR33867">
    <property type="entry name" value="RIBOSOME MATURATION FACTOR RIMP"/>
    <property type="match status" value="1"/>
</dbReference>
<dbReference type="PANTHER" id="PTHR33867:SF1">
    <property type="entry name" value="RIBOSOME MATURATION FACTOR RIMP"/>
    <property type="match status" value="1"/>
</dbReference>
<dbReference type="Pfam" id="PF17384">
    <property type="entry name" value="DUF150_C"/>
    <property type="match status" value="1"/>
</dbReference>
<dbReference type="Pfam" id="PF02576">
    <property type="entry name" value="RimP_N"/>
    <property type="match status" value="1"/>
</dbReference>
<dbReference type="SUPFAM" id="SSF74942">
    <property type="entry name" value="YhbC-like, C-terminal domain"/>
    <property type="match status" value="1"/>
</dbReference>
<dbReference type="SUPFAM" id="SSF75420">
    <property type="entry name" value="YhbC-like, N-terminal domain"/>
    <property type="match status" value="1"/>
</dbReference>
<proteinExistence type="inferred from homology"/>
<accession>B9JYK3</accession>
<organism>
    <name type="scientific">Allorhizobium ampelinum (strain ATCC BAA-846 / DSM 112012 / S4)</name>
    <name type="common">Agrobacterium vitis (strain S4)</name>
    <dbReference type="NCBI Taxonomy" id="311402"/>
    <lineage>
        <taxon>Bacteria</taxon>
        <taxon>Pseudomonadati</taxon>
        <taxon>Pseudomonadota</taxon>
        <taxon>Alphaproteobacteria</taxon>
        <taxon>Hyphomicrobiales</taxon>
        <taxon>Rhizobiaceae</taxon>
        <taxon>Rhizobium/Agrobacterium group</taxon>
        <taxon>Allorhizobium</taxon>
        <taxon>Allorhizobium ampelinum</taxon>
    </lineage>
</organism>
<evidence type="ECO:0000255" key="1">
    <source>
        <dbReference type="HAMAP-Rule" id="MF_01077"/>
    </source>
</evidence>
<sequence length="204" mass="22830">MSEHVPADEAPEPRLITETGLDRRIADIIEPVIVELGFELVRVRILNQNGMTLQIMAERKDGTMTVEDCEELSMAISPVLDVEDPVDKEYHLEVSSPGIDRPMVRASDFTRWQGNLLKCETSILIDNRKRFRGKIADVTPDGFILERDQVAYGEEPRLTIPFTALAEAKLILTDDLVRDALRADKQAKAAAEAANQNDETGEDQ</sequence>
<protein>
    <recommendedName>
        <fullName evidence="1">Ribosome maturation factor RimP</fullName>
    </recommendedName>
</protein>
<gene>
    <name evidence="1" type="primary">rimP</name>
    <name type="ordered locus">Avi_0164</name>
</gene>